<sequence>MKTFSAKPHEVKHEWFVVDATDKVLGRLAAAIAHRLRGKHKPIYTPHVDTGDYIVVINVDKLRVTGNKAEDKIYYRHSGYPGGLYETTFKKMHARFPARPLEKAVKGMLPKGPLGYAMIKKLKIYAGDIHPHAAQQPQSLEINA</sequence>
<organism>
    <name type="scientific">Nitrosomonas eutropha (strain DSM 101675 / C91 / Nm57)</name>
    <dbReference type="NCBI Taxonomy" id="335283"/>
    <lineage>
        <taxon>Bacteria</taxon>
        <taxon>Pseudomonadati</taxon>
        <taxon>Pseudomonadota</taxon>
        <taxon>Betaproteobacteria</taxon>
        <taxon>Nitrosomonadales</taxon>
        <taxon>Nitrosomonadaceae</taxon>
        <taxon>Nitrosomonas</taxon>
    </lineage>
</organism>
<reference key="1">
    <citation type="journal article" date="2007" name="Environ. Microbiol.">
        <title>Whole-genome analysis of the ammonia-oxidizing bacterium, Nitrosomonas eutropha C91: implications for niche adaptation.</title>
        <authorList>
            <person name="Stein L.Y."/>
            <person name="Arp D.J."/>
            <person name="Berube P.M."/>
            <person name="Chain P.S."/>
            <person name="Hauser L."/>
            <person name="Jetten M.S."/>
            <person name="Klotz M.G."/>
            <person name="Larimer F.W."/>
            <person name="Norton J.M."/>
            <person name="Op den Camp H.J.M."/>
            <person name="Shin M."/>
            <person name="Wei X."/>
        </authorList>
    </citation>
    <scope>NUCLEOTIDE SEQUENCE [LARGE SCALE GENOMIC DNA]</scope>
    <source>
        <strain>DSM 101675 / C91 / Nm57</strain>
    </source>
</reference>
<proteinExistence type="inferred from homology"/>
<keyword id="KW-0687">Ribonucleoprotein</keyword>
<keyword id="KW-0689">Ribosomal protein</keyword>
<accession>Q0AI00</accession>
<protein>
    <recommendedName>
        <fullName evidence="1">Large ribosomal subunit protein uL13</fullName>
    </recommendedName>
    <alternativeName>
        <fullName evidence="2">50S ribosomal protein L13</fullName>
    </alternativeName>
</protein>
<evidence type="ECO:0000255" key="1">
    <source>
        <dbReference type="HAMAP-Rule" id="MF_01366"/>
    </source>
</evidence>
<evidence type="ECO:0000305" key="2"/>
<gene>
    <name evidence="1" type="primary">rplM</name>
    <name type="ordered locus">Neut_0762</name>
</gene>
<feature type="chain" id="PRO_1000055423" description="Large ribosomal subunit protein uL13">
    <location>
        <begin position="1"/>
        <end position="144"/>
    </location>
</feature>
<name>RL13_NITEC</name>
<comment type="function">
    <text evidence="1">This protein is one of the early assembly proteins of the 50S ribosomal subunit, although it is not seen to bind rRNA by itself. It is important during the early stages of 50S assembly.</text>
</comment>
<comment type="subunit">
    <text evidence="1">Part of the 50S ribosomal subunit.</text>
</comment>
<comment type="similarity">
    <text evidence="1">Belongs to the universal ribosomal protein uL13 family.</text>
</comment>
<dbReference type="EMBL" id="CP000450">
    <property type="protein sequence ID" value="ABI59032.1"/>
    <property type="molecule type" value="Genomic_DNA"/>
</dbReference>
<dbReference type="RefSeq" id="WP_011633857.1">
    <property type="nucleotide sequence ID" value="NC_008344.1"/>
</dbReference>
<dbReference type="SMR" id="Q0AI00"/>
<dbReference type="STRING" id="335283.Neut_0762"/>
<dbReference type="KEGG" id="net:Neut_0762"/>
<dbReference type="eggNOG" id="COG0102">
    <property type="taxonomic scope" value="Bacteria"/>
</dbReference>
<dbReference type="HOGENOM" id="CLU_082184_2_2_4"/>
<dbReference type="OrthoDB" id="9801330at2"/>
<dbReference type="Proteomes" id="UP000001966">
    <property type="component" value="Chromosome"/>
</dbReference>
<dbReference type="GO" id="GO:0022625">
    <property type="term" value="C:cytosolic large ribosomal subunit"/>
    <property type="evidence" value="ECO:0007669"/>
    <property type="project" value="TreeGrafter"/>
</dbReference>
<dbReference type="GO" id="GO:0003729">
    <property type="term" value="F:mRNA binding"/>
    <property type="evidence" value="ECO:0007669"/>
    <property type="project" value="TreeGrafter"/>
</dbReference>
<dbReference type="GO" id="GO:0003735">
    <property type="term" value="F:structural constituent of ribosome"/>
    <property type="evidence" value="ECO:0007669"/>
    <property type="project" value="InterPro"/>
</dbReference>
<dbReference type="GO" id="GO:0017148">
    <property type="term" value="P:negative regulation of translation"/>
    <property type="evidence" value="ECO:0007669"/>
    <property type="project" value="TreeGrafter"/>
</dbReference>
<dbReference type="GO" id="GO:0006412">
    <property type="term" value="P:translation"/>
    <property type="evidence" value="ECO:0007669"/>
    <property type="project" value="UniProtKB-UniRule"/>
</dbReference>
<dbReference type="CDD" id="cd00392">
    <property type="entry name" value="Ribosomal_L13"/>
    <property type="match status" value="1"/>
</dbReference>
<dbReference type="FunFam" id="3.90.1180.10:FF:000001">
    <property type="entry name" value="50S ribosomal protein L13"/>
    <property type="match status" value="1"/>
</dbReference>
<dbReference type="Gene3D" id="3.90.1180.10">
    <property type="entry name" value="Ribosomal protein L13"/>
    <property type="match status" value="1"/>
</dbReference>
<dbReference type="HAMAP" id="MF_01366">
    <property type="entry name" value="Ribosomal_uL13"/>
    <property type="match status" value="1"/>
</dbReference>
<dbReference type="InterPro" id="IPR005822">
    <property type="entry name" value="Ribosomal_uL13"/>
</dbReference>
<dbReference type="InterPro" id="IPR005823">
    <property type="entry name" value="Ribosomal_uL13_bac-type"/>
</dbReference>
<dbReference type="InterPro" id="IPR036899">
    <property type="entry name" value="Ribosomal_uL13_sf"/>
</dbReference>
<dbReference type="NCBIfam" id="TIGR01066">
    <property type="entry name" value="rplM_bact"/>
    <property type="match status" value="1"/>
</dbReference>
<dbReference type="PANTHER" id="PTHR11545:SF2">
    <property type="entry name" value="LARGE RIBOSOMAL SUBUNIT PROTEIN UL13M"/>
    <property type="match status" value="1"/>
</dbReference>
<dbReference type="PANTHER" id="PTHR11545">
    <property type="entry name" value="RIBOSOMAL PROTEIN L13"/>
    <property type="match status" value="1"/>
</dbReference>
<dbReference type="Pfam" id="PF00572">
    <property type="entry name" value="Ribosomal_L13"/>
    <property type="match status" value="1"/>
</dbReference>
<dbReference type="PIRSF" id="PIRSF002181">
    <property type="entry name" value="Ribosomal_L13"/>
    <property type="match status" value="1"/>
</dbReference>
<dbReference type="SUPFAM" id="SSF52161">
    <property type="entry name" value="Ribosomal protein L13"/>
    <property type="match status" value="1"/>
</dbReference>